<proteinExistence type="inferred from homology"/>
<reference key="1">
    <citation type="journal article" date="2007" name="PLoS Biol.">
        <title>Evolution of symbiotic bacteria in the distal human intestine.</title>
        <authorList>
            <person name="Xu J."/>
            <person name="Mahowald M.A."/>
            <person name="Ley R.E."/>
            <person name="Lozupone C.A."/>
            <person name="Hamady M."/>
            <person name="Martens E.C."/>
            <person name="Henrissat B."/>
            <person name="Coutinho P.M."/>
            <person name="Minx P."/>
            <person name="Latreille P."/>
            <person name="Cordum H."/>
            <person name="Van Brunt A."/>
            <person name="Kim K."/>
            <person name="Fulton R.S."/>
            <person name="Fulton L.A."/>
            <person name="Clifton S.W."/>
            <person name="Wilson R.K."/>
            <person name="Knight R.D."/>
            <person name="Gordon J.I."/>
        </authorList>
    </citation>
    <scope>NUCLEOTIDE SEQUENCE [LARGE SCALE GENOMIC DNA]</scope>
    <source>
        <strain>ATCC 8503 / DSM 20701 / CIP 104284 / JCM 5825 / NCTC 11152</strain>
    </source>
</reference>
<gene>
    <name evidence="1" type="primary">rplD</name>
    <name type="ordered locus">BDI_2379</name>
</gene>
<organism>
    <name type="scientific">Parabacteroides distasonis (strain ATCC 8503 / DSM 20701 / CIP 104284 / JCM 5825 / NCTC 11152)</name>
    <dbReference type="NCBI Taxonomy" id="435591"/>
    <lineage>
        <taxon>Bacteria</taxon>
        <taxon>Pseudomonadati</taxon>
        <taxon>Bacteroidota</taxon>
        <taxon>Bacteroidia</taxon>
        <taxon>Bacteroidales</taxon>
        <taxon>Tannerellaceae</taxon>
        <taxon>Parabacteroides</taxon>
    </lineage>
</organism>
<name>RL4_PARD8</name>
<evidence type="ECO:0000255" key="1">
    <source>
        <dbReference type="HAMAP-Rule" id="MF_01328"/>
    </source>
</evidence>
<evidence type="ECO:0000256" key="2">
    <source>
        <dbReference type="SAM" id="MobiDB-lite"/>
    </source>
</evidence>
<evidence type="ECO:0000305" key="3"/>
<keyword id="KW-1185">Reference proteome</keyword>
<keyword id="KW-0687">Ribonucleoprotein</keyword>
<keyword id="KW-0689">Ribosomal protein</keyword>
<keyword id="KW-0694">RNA-binding</keyword>
<keyword id="KW-0699">rRNA-binding</keyword>
<sequence>MELSVFNIKGEDTGRKVTLNDAIFGIEPNDHAIYLDVKQYLANQRQGTHKSKERSEVSGSTRKLIRQKGGGGARRGDINSPVLVGGGRVFGPKPRDYEFKLNKKVKSLARKSALSYKAKNNAIVVVEDFTMEAPKTKEFITIAKNLKVADKKLLMVLPEKNNLVYLSARNLEKASVITASELNTYAVLNAVNLVLTESSVAVVEQNFKA</sequence>
<feature type="chain" id="PRO_1000052458" description="Large ribosomal subunit protein uL4">
    <location>
        <begin position="1"/>
        <end position="209"/>
    </location>
</feature>
<feature type="region of interest" description="Disordered" evidence="2">
    <location>
        <begin position="44"/>
        <end position="77"/>
    </location>
</feature>
<accession>A6LEJ0</accession>
<comment type="function">
    <text evidence="1">One of the primary rRNA binding proteins, this protein initially binds near the 5'-end of the 23S rRNA. It is important during the early stages of 50S assembly. It makes multiple contacts with different domains of the 23S rRNA in the assembled 50S subunit and ribosome.</text>
</comment>
<comment type="function">
    <text evidence="1">Forms part of the polypeptide exit tunnel.</text>
</comment>
<comment type="subunit">
    <text evidence="1">Part of the 50S ribosomal subunit.</text>
</comment>
<comment type="similarity">
    <text evidence="1">Belongs to the universal ribosomal protein uL4 family.</text>
</comment>
<protein>
    <recommendedName>
        <fullName evidence="1">Large ribosomal subunit protein uL4</fullName>
    </recommendedName>
    <alternativeName>
        <fullName evidence="3">50S ribosomal protein L4</fullName>
    </alternativeName>
</protein>
<dbReference type="EMBL" id="CP000140">
    <property type="protein sequence ID" value="ABR44104.1"/>
    <property type="molecule type" value="Genomic_DNA"/>
</dbReference>
<dbReference type="RefSeq" id="WP_005853966.1">
    <property type="nucleotide sequence ID" value="NZ_LR215978.1"/>
</dbReference>
<dbReference type="SMR" id="A6LEJ0"/>
<dbReference type="STRING" id="435591.BDI_2379"/>
<dbReference type="PaxDb" id="435591-BDI_2379"/>
<dbReference type="GeneID" id="93522372"/>
<dbReference type="KEGG" id="pdi:BDI_2379"/>
<dbReference type="eggNOG" id="COG0088">
    <property type="taxonomic scope" value="Bacteria"/>
</dbReference>
<dbReference type="HOGENOM" id="CLU_041575_5_2_10"/>
<dbReference type="BioCyc" id="PDIS435591:G1G5A-2444-MONOMER"/>
<dbReference type="Proteomes" id="UP000000566">
    <property type="component" value="Chromosome"/>
</dbReference>
<dbReference type="GO" id="GO:1990904">
    <property type="term" value="C:ribonucleoprotein complex"/>
    <property type="evidence" value="ECO:0007669"/>
    <property type="project" value="UniProtKB-KW"/>
</dbReference>
<dbReference type="GO" id="GO:0005840">
    <property type="term" value="C:ribosome"/>
    <property type="evidence" value="ECO:0007669"/>
    <property type="project" value="UniProtKB-KW"/>
</dbReference>
<dbReference type="GO" id="GO:0019843">
    <property type="term" value="F:rRNA binding"/>
    <property type="evidence" value="ECO:0007669"/>
    <property type="project" value="UniProtKB-UniRule"/>
</dbReference>
<dbReference type="GO" id="GO:0003735">
    <property type="term" value="F:structural constituent of ribosome"/>
    <property type="evidence" value="ECO:0007669"/>
    <property type="project" value="InterPro"/>
</dbReference>
<dbReference type="GO" id="GO:0006412">
    <property type="term" value="P:translation"/>
    <property type="evidence" value="ECO:0007669"/>
    <property type="project" value="UniProtKB-UniRule"/>
</dbReference>
<dbReference type="FunFam" id="3.40.1370.10:FF:000009">
    <property type="entry name" value="50S ribosomal protein L4"/>
    <property type="match status" value="1"/>
</dbReference>
<dbReference type="Gene3D" id="3.40.1370.10">
    <property type="match status" value="1"/>
</dbReference>
<dbReference type="HAMAP" id="MF_01328_B">
    <property type="entry name" value="Ribosomal_uL4_B"/>
    <property type="match status" value="1"/>
</dbReference>
<dbReference type="InterPro" id="IPR002136">
    <property type="entry name" value="Ribosomal_uL4"/>
</dbReference>
<dbReference type="InterPro" id="IPR013005">
    <property type="entry name" value="Ribosomal_uL4-like"/>
</dbReference>
<dbReference type="InterPro" id="IPR023574">
    <property type="entry name" value="Ribosomal_uL4_dom_sf"/>
</dbReference>
<dbReference type="NCBIfam" id="TIGR03953">
    <property type="entry name" value="rplD_bact"/>
    <property type="match status" value="1"/>
</dbReference>
<dbReference type="PANTHER" id="PTHR10746">
    <property type="entry name" value="50S RIBOSOMAL PROTEIN L4"/>
    <property type="match status" value="1"/>
</dbReference>
<dbReference type="PANTHER" id="PTHR10746:SF6">
    <property type="entry name" value="LARGE RIBOSOMAL SUBUNIT PROTEIN UL4M"/>
    <property type="match status" value="1"/>
</dbReference>
<dbReference type="Pfam" id="PF00573">
    <property type="entry name" value="Ribosomal_L4"/>
    <property type="match status" value="1"/>
</dbReference>
<dbReference type="SUPFAM" id="SSF52166">
    <property type="entry name" value="Ribosomal protein L4"/>
    <property type="match status" value="1"/>
</dbReference>